<gene>
    <name evidence="1" type="primary">glgA</name>
    <name type="ordered locus">CAB790</name>
</gene>
<proteinExistence type="inferred from homology"/>
<dbReference type="EC" id="2.4.1.21" evidence="1"/>
<dbReference type="EMBL" id="CR848038">
    <property type="protein sequence ID" value="CAH64232.1"/>
    <property type="molecule type" value="Genomic_DNA"/>
</dbReference>
<dbReference type="RefSeq" id="WP_006344396.1">
    <property type="nucleotide sequence ID" value="NC_004552.2"/>
</dbReference>
<dbReference type="SMR" id="Q5L562"/>
<dbReference type="CAZy" id="GT5">
    <property type="family name" value="Glycosyltransferase Family 5"/>
</dbReference>
<dbReference type="KEGG" id="cab:CAB790"/>
<dbReference type="eggNOG" id="COG0297">
    <property type="taxonomic scope" value="Bacteria"/>
</dbReference>
<dbReference type="HOGENOM" id="CLU_009583_18_5_0"/>
<dbReference type="OrthoDB" id="9808590at2"/>
<dbReference type="UniPathway" id="UPA00164"/>
<dbReference type="Proteomes" id="UP000001012">
    <property type="component" value="Chromosome"/>
</dbReference>
<dbReference type="GO" id="GO:0009011">
    <property type="term" value="F:alpha-1,4-glucan glucosyltransferase (ADP-glucose donor) activity"/>
    <property type="evidence" value="ECO:0007669"/>
    <property type="project" value="UniProtKB-UniRule"/>
</dbReference>
<dbReference type="GO" id="GO:0004373">
    <property type="term" value="F:alpha-1,4-glucan glucosyltransferase (UDP-glucose donor) activity"/>
    <property type="evidence" value="ECO:0007669"/>
    <property type="project" value="InterPro"/>
</dbReference>
<dbReference type="GO" id="GO:0005978">
    <property type="term" value="P:glycogen biosynthetic process"/>
    <property type="evidence" value="ECO:0007669"/>
    <property type="project" value="UniProtKB-UniRule"/>
</dbReference>
<dbReference type="CDD" id="cd03791">
    <property type="entry name" value="GT5_Glycogen_synthase_DULL1-like"/>
    <property type="match status" value="1"/>
</dbReference>
<dbReference type="Gene3D" id="3.40.50.2000">
    <property type="entry name" value="Glycogen Phosphorylase B"/>
    <property type="match status" value="2"/>
</dbReference>
<dbReference type="HAMAP" id="MF_00484">
    <property type="entry name" value="Glycogen_synth"/>
    <property type="match status" value="1"/>
</dbReference>
<dbReference type="InterPro" id="IPR001296">
    <property type="entry name" value="Glyco_trans_1"/>
</dbReference>
<dbReference type="InterPro" id="IPR011835">
    <property type="entry name" value="GS/SS"/>
</dbReference>
<dbReference type="InterPro" id="IPR013534">
    <property type="entry name" value="Starch_synth_cat_dom"/>
</dbReference>
<dbReference type="NCBIfam" id="TIGR02095">
    <property type="entry name" value="glgA"/>
    <property type="match status" value="1"/>
</dbReference>
<dbReference type="NCBIfam" id="NF001904">
    <property type="entry name" value="PRK00654.2-3"/>
    <property type="match status" value="1"/>
</dbReference>
<dbReference type="PANTHER" id="PTHR46083">
    <property type="match status" value="1"/>
</dbReference>
<dbReference type="PANTHER" id="PTHR46083:SF1">
    <property type="entry name" value="GLYCOGEN SYNTHASE 2-RELATED"/>
    <property type="match status" value="1"/>
</dbReference>
<dbReference type="Pfam" id="PF08323">
    <property type="entry name" value="Glyco_transf_5"/>
    <property type="match status" value="1"/>
</dbReference>
<dbReference type="Pfam" id="PF00534">
    <property type="entry name" value="Glycos_transf_1"/>
    <property type="match status" value="1"/>
</dbReference>
<dbReference type="SUPFAM" id="SSF53756">
    <property type="entry name" value="UDP-Glycosyltransferase/glycogen phosphorylase"/>
    <property type="match status" value="1"/>
</dbReference>
<organism>
    <name type="scientific">Chlamydia abortus (strain DSM 27085 / S26/3)</name>
    <name type="common">Chlamydophila abortus</name>
    <dbReference type="NCBI Taxonomy" id="218497"/>
    <lineage>
        <taxon>Bacteria</taxon>
        <taxon>Pseudomonadati</taxon>
        <taxon>Chlamydiota</taxon>
        <taxon>Chlamydiia</taxon>
        <taxon>Chlamydiales</taxon>
        <taxon>Chlamydiaceae</taxon>
        <taxon>Chlamydia/Chlamydophila group</taxon>
        <taxon>Chlamydia</taxon>
    </lineage>
</organism>
<feature type="chain" id="PRO_0000230237" description="Glycogen synthase">
    <location>
        <begin position="1"/>
        <end position="475"/>
    </location>
</feature>
<feature type="binding site" evidence="1">
    <location>
        <position position="15"/>
    </location>
    <ligand>
        <name>ADP-alpha-D-glucose</name>
        <dbReference type="ChEBI" id="CHEBI:57498"/>
    </ligand>
</feature>
<sequence>MKIIQASVECAPFIKAGGLGDVVYSLSKALSIHHDVEILLPFYPLLFPAFSSQVLDEHVFAYNFLGRQNATATSYRYEGMTLTVITLDSQLELFSTSTIYTEDDTLRFSAFSAAAAAYIQKLDKVDVVHMHDWHVGLLAGLLKEPHLPSYPKRIFTIHNFSYRGYCSTQLLGASEISDFGLSNYQLFRDPSTSVLLKGALYCSDYITTVSPSYAQDILNDYSDYEIHDAIMSRRHVFCGILNGIDENIWNPETDPALAVRYGTHLLKSPDVLFTKKEENKIALYEKLGLSLEYSPLMCVISRIVEQKGPEFMKAAILHAMENSYALVIAGTCYDQETQRQFTNLQESLTTSPNIRIILDYNDPLVRLIYGAADMICIPSHFEPCGLTQLIGMRYGTVPLVRSTGGLADTVAAGVNGFTFSHTDNFNDFFHMLSQAVSTYRHEPDVWFQLVEEGMLRPSGLTTMAAHYLGVYNSLL</sequence>
<accession>Q5L562</accession>
<comment type="function">
    <text evidence="1">Synthesizes alpha-1,4-glucan chains using ADP-glucose.</text>
</comment>
<comment type="catalytic activity">
    <reaction evidence="1">
        <text>[(1-&gt;4)-alpha-D-glucosyl](n) + ADP-alpha-D-glucose = [(1-&gt;4)-alpha-D-glucosyl](n+1) + ADP + H(+)</text>
        <dbReference type="Rhea" id="RHEA:18189"/>
        <dbReference type="Rhea" id="RHEA-COMP:9584"/>
        <dbReference type="Rhea" id="RHEA-COMP:9587"/>
        <dbReference type="ChEBI" id="CHEBI:15378"/>
        <dbReference type="ChEBI" id="CHEBI:15444"/>
        <dbReference type="ChEBI" id="CHEBI:57498"/>
        <dbReference type="ChEBI" id="CHEBI:456216"/>
        <dbReference type="EC" id="2.4.1.21"/>
    </reaction>
</comment>
<comment type="pathway">
    <text evidence="1">Glycan biosynthesis; glycogen biosynthesis.</text>
</comment>
<comment type="similarity">
    <text evidence="1">Belongs to the glycosyltransferase 1 family. Bacterial/plant glycogen synthase subfamily.</text>
</comment>
<name>GLGA_CHLAB</name>
<protein>
    <recommendedName>
        <fullName evidence="1">Glycogen synthase</fullName>
        <ecNumber evidence="1">2.4.1.21</ecNumber>
    </recommendedName>
    <alternativeName>
        <fullName evidence="1">Starch [bacterial glycogen] synthase</fullName>
    </alternativeName>
</protein>
<evidence type="ECO:0000255" key="1">
    <source>
        <dbReference type="HAMAP-Rule" id="MF_00484"/>
    </source>
</evidence>
<reference key="1">
    <citation type="journal article" date="2005" name="Genome Res.">
        <title>The Chlamydophila abortus genome sequence reveals an array of variable proteins that contribute to interspecies variation.</title>
        <authorList>
            <person name="Thomson N.R."/>
            <person name="Yeats C."/>
            <person name="Bell K."/>
            <person name="Holden M.T.G."/>
            <person name="Bentley S.D."/>
            <person name="Livingstone M."/>
            <person name="Cerdeno-Tarraga A.-M."/>
            <person name="Harris B."/>
            <person name="Doggett J."/>
            <person name="Ormond D."/>
            <person name="Mungall K."/>
            <person name="Clarke K."/>
            <person name="Feltwell T."/>
            <person name="Hance Z."/>
            <person name="Sanders M."/>
            <person name="Quail M.A."/>
            <person name="Price C."/>
            <person name="Barrell B.G."/>
            <person name="Parkhill J."/>
            <person name="Longbottom D."/>
        </authorList>
    </citation>
    <scope>NUCLEOTIDE SEQUENCE [LARGE SCALE GENOMIC DNA]</scope>
    <source>
        <strain>DSM 27085 / S26/3</strain>
    </source>
</reference>
<keyword id="KW-0320">Glycogen biosynthesis</keyword>
<keyword id="KW-0328">Glycosyltransferase</keyword>
<keyword id="KW-0808">Transferase</keyword>